<keyword id="KW-1185">Reference proteome</keyword>
<keyword id="KW-0687">Ribonucleoprotein</keyword>
<keyword id="KW-0689">Ribosomal protein</keyword>
<keyword id="KW-0694">RNA-binding</keyword>
<keyword id="KW-0699">rRNA-binding</keyword>
<organism>
    <name type="scientific">Methylobacterium nodulans (strain LMG 21967 / CNCM I-2342 / ORS 2060)</name>
    <dbReference type="NCBI Taxonomy" id="460265"/>
    <lineage>
        <taxon>Bacteria</taxon>
        <taxon>Pseudomonadati</taxon>
        <taxon>Pseudomonadota</taxon>
        <taxon>Alphaproteobacteria</taxon>
        <taxon>Hyphomicrobiales</taxon>
        <taxon>Methylobacteriaceae</taxon>
        <taxon>Methylobacterium</taxon>
    </lineage>
</organism>
<gene>
    <name evidence="1" type="primary">rpsO</name>
    <name type="ordered locus">Mnod_2896</name>
</gene>
<dbReference type="EMBL" id="CP001349">
    <property type="protein sequence ID" value="ACL57847.1"/>
    <property type="molecule type" value="Genomic_DNA"/>
</dbReference>
<dbReference type="RefSeq" id="WP_015929522.1">
    <property type="nucleotide sequence ID" value="NC_011894.1"/>
</dbReference>
<dbReference type="SMR" id="B8IGX2"/>
<dbReference type="STRING" id="460265.Mnod_2896"/>
<dbReference type="KEGG" id="mno:Mnod_2896"/>
<dbReference type="eggNOG" id="COG0184">
    <property type="taxonomic scope" value="Bacteria"/>
</dbReference>
<dbReference type="HOGENOM" id="CLU_148518_0_0_5"/>
<dbReference type="OrthoDB" id="9799262at2"/>
<dbReference type="Proteomes" id="UP000008207">
    <property type="component" value="Chromosome"/>
</dbReference>
<dbReference type="GO" id="GO:0022627">
    <property type="term" value="C:cytosolic small ribosomal subunit"/>
    <property type="evidence" value="ECO:0007669"/>
    <property type="project" value="TreeGrafter"/>
</dbReference>
<dbReference type="GO" id="GO:0019843">
    <property type="term" value="F:rRNA binding"/>
    <property type="evidence" value="ECO:0007669"/>
    <property type="project" value="UniProtKB-UniRule"/>
</dbReference>
<dbReference type="GO" id="GO:0003735">
    <property type="term" value="F:structural constituent of ribosome"/>
    <property type="evidence" value="ECO:0007669"/>
    <property type="project" value="InterPro"/>
</dbReference>
<dbReference type="GO" id="GO:0006412">
    <property type="term" value="P:translation"/>
    <property type="evidence" value="ECO:0007669"/>
    <property type="project" value="UniProtKB-UniRule"/>
</dbReference>
<dbReference type="CDD" id="cd00353">
    <property type="entry name" value="Ribosomal_S15p_S13e"/>
    <property type="match status" value="1"/>
</dbReference>
<dbReference type="FunFam" id="1.10.287.10:FF:000002">
    <property type="entry name" value="30S ribosomal protein S15"/>
    <property type="match status" value="1"/>
</dbReference>
<dbReference type="Gene3D" id="6.10.250.3130">
    <property type="match status" value="1"/>
</dbReference>
<dbReference type="Gene3D" id="1.10.287.10">
    <property type="entry name" value="S15/NS1, RNA-binding"/>
    <property type="match status" value="1"/>
</dbReference>
<dbReference type="HAMAP" id="MF_01343_B">
    <property type="entry name" value="Ribosomal_uS15_B"/>
    <property type="match status" value="1"/>
</dbReference>
<dbReference type="InterPro" id="IPR000589">
    <property type="entry name" value="Ribosomal_uS15"/>
</dbReference>
<dbReference type="InterPro" id="IPR005290">
    <property type="entry name" value="Ribosomal_uS15_bac-type"/>
</dbReference>
<dbReference type="InterPro" id="IPR009068">
    <property type="entry name" value="uS15_NS1_RNA-bd_sf"/>
</dbReference>
<dbReference type="NCBIfam" id="TIGR00952">
    <property type="entry name" value="S15_bact"/>
    <property type="match status" value="1"/>
</dbReference>
<dbReference type="PANTHER" id="PTHR23321">
    <property type="entry name" value="RIBOSOMAL PROTEIN S15, BACTERIAL AND ORGANELLAR"/>
    <property type="match status" value="1"/>
</dbReference>
<dbReference type="PANTHER" id="PTHR23321:SF26">
    <property type="entry name" value="SMALL RIBOSOMAL SUBUNIT PROTEIN US15M"/>
    <property type="match status" value="1"/>
</dbReference>
<dbReference type="Pfam" id="PF00312">
    <property type="entry name" value="Ribosomal_S15"/>
    <property type="match status" value="1"/>
</dbReference>
<dbReference type="SMART" id="SM01387">
    <property type="entry name" value="Ribosomal_S15"/>
    <property type="match status" value="1"/>
</dbReference>
<dbReference type="SUPFAM" id="SSF47060">
    <property type="entry name" value="S15/NS1 RNA-binding domain"/>
    <property type="match status" value="1"/>
</dbReference>
<dbReference type="PROSITE" id="PS00362">
    <property type="entry name" value="RIBOSOMAL_S15"/>
    <property type="match status" value="1"/>
</dbReference>
<protein>
    <recommendedName>
        <fullName evidence="1">Small ribosomal subunit protein uS15</fullName>
    </recommendedName>
    <alternativeName>
        <fullName evidence="2">30S ribosomal protein S15</fullName>
    </alternativeName>
</protein>
<accession>B8IGX2</accession>
<feature type="chain" id="PRO_1000166427" description="Small ribosomal subunit protein uS15">
    <location>
        <begin position="1"/>
        <end position="89"/>
    </location>
</feature>
<evidence type="ECO:0000255" key="1">
    <source>
        <dbReference type="HAMAP-Rule" id="MF_01343"/>
    </source>
</evidence>
<evidence type="ECO:0000305" key="2"/>
<name>RS15_METNO</name>
<reference key="1">
    <citation type="submission" date="2009-01" db="EMBL/GenBank/DDBJ databases">
        <title>Complete sequence of chromosome of Methylobacterium nodulans ORS 2060.</title>
        <authorList>
            <consortium name="US DOE Joint Genome Institute"/>
            <person name="Lucas S."/>
            <person name="Copeland A."/>
            <person name="Lapidus A."/>
            <person name="Glavina del Rio T."/>
            <person name="Dalin E."/>
            <person name="Tice H."/>
            <person name="Bruce D."/>
            <person name="Goodwin L."/>
            <person name="Pitluck S."/>
            <person name="Sims D."/>
            <person name="Brettin T."/>
            <person name="Detter J.C."/>
            <person name="Han C."/>
            <person name="Larimer F."/>
            <person name="Land M."/>
            <person name="Hauser L."/>
            <person name="Kyrpides N."/>
            <person name="Ivanova N."/>
            <person name="Marx C.J."/>
            <person name="Richardson P."/>
        </authorList>
    </citation>
    <scope>NUCLEOTIDE SEQUENCE [LARGE SCALE GENOMIC DNA]</scope>
    <source>
        <strain>LMG 21967 / CNCM I-2342 / ORS 2060</strain>
    </source>
</reference>
<sequence length="89" mass="10231">MSITAERKTALIKEYARGGADTGSPEVQIAILTERIANLTGHFKTHTKDNHSRRGLLKLVSQRRSLLDYLKRKDEARYRALIERLGIRR</sequence>
<comment type="function">
    <text evidence="1">One of the primary rRNA binding proteins, it binds directly to 16S rRNA where it helps nucleate assembly of the platform of the 30S subunit by binding and bridging several RNA helices of the 16S rRNA.</text>
</comment>
<comment type="function">
    <text evidence="1">Forms an intersubunit bridge (bridge B4) with the 23S rRNA of the 50S subunit in the ribosome.</text>
</comment>
<comment type="subunit">
    <text evidence="1">Part of the 30S ribosomal subunit. Forms a bridge to the 50S subunit in the 70S ribosome, contacting the 23S rRNA.</text>
</comment>
<comment type="similarity">
    <text evidence="1">Belongs to the universal ribosomal protein uS15 family.</text>
</comment>
<proteinExistence type="inferred from homology"/>